<dbReference type="EC" id="6.3.2.4" evidence="2"/>
<dbReference type="EMBL" id="CP000412">
    <property type="protein sequence ID" value="ABJ57840.1"/>
    <property type="molecule type" value="Genomic_DNA"/>
</dbReference>
<dbReference type="RefSeq" id="WP_011677941.1">
    <property type="nucleotide sequence ID" value="NC_008529.1"/>
</dbReference>
<dbReference type="SMR" id="Q04CI2"/>
<dbReference type="KEGG" id="lbu:LBUL_0161"/>
<dbReference type="HOGENOM" id="CLU_039268_0_0_9"/>
<dbReference type="BioCyc" id="LDEL321956:LBUL_RS00745-MONOMER"/>
<dbReference type="UniPathway" id="UPA00219"/>
<dbReference type="GO" id="GO:0005829">
    <property type="term" value="C:cytosol"/>
    <property type="evidence" value="ECO:0007669"/>
    <property type="project" value="TreeGrafter"/>
</dbReference>
<dbReference type="GO" id="GO:0005524">
    <property type="term" value="F:ATP binding"/>
    <property type="evidence" value="ECO:0007669"/>
    <property type="project" value="UniProtKB-KW"/>
</dbReference>
<dbReference type="GO" id="GO:0008716">
    <property type="term" value="F:D-alanine-D-alanine ligase activity"/>
    <property type="evidence" value="ECO:0007669"/>
    <property type="project" value="UniProtKB-UniRule"/>
</dbReference>
<dbReference type="GO" id="GO:0046872">
    <property type="term" value="F:metal ion binding"/>
    <property type="evidence" value="ECO:0007669"/>
    <property type="project" value="UniProtKB-KW"/>
</dbReference>
<dbReference type="GO" id="GO:0071555">
    <property type="term" value="P:cell wall organization"/>
    <property type="evidence" value="ECO:0007669"/>
    <property type="project" value="UniProtKB-KW"/>
</dbReference>
<dbReference type="GO" id="GO:0009252">
    <property type="term" value="P:peptidoglycan biosynthetic process"/>
    <property type="evidence" value="ECO:0007669"/>
    <property type="project" value="UniProtKB-UniRule"/>
</dbReference>
<dbReference type="GO" id="GO:0008360">
    <property type="term" value="P:regulation of cell shape"/>
    <property type="evidence" value="ECO:0007669"/>
    <property type="project" value="UniProtKB-KW"/>
</dbReference>
<dbReference type="FunFam" id="3.30.470.20:FF:000008">
    <property type="entry name" value="D-alanine--D-alanine ligase"/>
    <property type="match status" value="1"/>
</dbReference>
<dbReference type="Gene3D" id="3.40.50.20">
    <property type="match status" value="1"/>
</dbReference>
<dbReference type="Gene3D" id="3.30.1490.20">
    <property type="entry name" value="ATP-grasp fold, A domain"/>
    <property type="match status" value="1"/>
</dbReference>
<dbReference type="Gene3D" id="3.30.470.20">
    <property type="entry name" value="ATP-grasp fold, B domain"/>
    <property type="match status" value="1"/>
</dbReference>
<dbReference type="HAMAP" id="MF_00047">
    <property type="entry name" value="Dala_Dala_lig"/>
    <property type="match status" value="1"/>
</dbReference>
<dbReference type="InterPro" id="IPR011761">
    <property type="entry name" value="ATP-grasp"/>
</dbReference>
<dbReference type="InterPro" id="IPR013815">
    <property type="entry name" value="ATP_grasp_subdomain_1"/>
</dbReference>
<dbReference type="InterPro" id="IPR000291">
    <property type="entry name" value="D-Ala_lig_Van_CS"/>
</dbReference>
<dbReference type="InterPro" id="IPR005905">
    <property type="entry name" value="D_ala_D_ala"/>
</dbReference>
<dbReference type="InterPro" id="IPR011095">
    <property type="entry name" value="Dala_Dala_lig_C"/>
</dbReference>
<dbReference type="InterPro" id="IPR011127">
    <property type="entry name" value="Dala_Dala_lig_N"/>
</dbReference>
<dbReference type="InterPro" id="IPR016185">
    <property type="entry name" value="PreATP-grasp_dom_sf"/>
</dbReference>
<dbReference type="NCBIfam" id="TIGR01205">
    <property type="entry name" value="D_ala_D_alaTIGR"/>
    <property type="match status" value="1"/>
</dbReference>
<dbReference type="NCBIfam" id="NF002528">
    <property type="entry name" value="PRK01966.1-4"/>
    <property type="match status" value="1"/>
</dbReference>
<dbReference type="PANTHER" id="PTHR23132">
    <property type="entry name" value="D-ALANINE--D-ALANINE LIGASE"/>
    <property type="match status" value="1"/>
</dbReference>
<dbReference type="PANTHER" id="PTHR23132:SF25">
    <property type="entry name" value="D-ALANINE--D-ALANINE LIGASE A"/>
    <property type="match status" value="1"/>
</dbReference>
<dbReference type="Pfam" id="PF07478">
    <property type="entry name" value="Dala_Dala_lig_C"/>
    <property type="match status" value="1"/>
</dbReference>
<dbReference type="Pfam" id="PF01820">
    <property type="entry name" value="Dala_Dala_lig_N"/>
    <property type="match status" value="1"/>
</dbReference>
<dbReference type="PIRSF" id="PIRSF039102">
    <property type="entry name" value="Ddl/VanB"/>
    <property type="match status" value="1"/>
</dbReference>
<dbReference type="SUPFAM" id="SSF56059">
    <property type="entry name" value="Glutathione synthetase ATP-binding domain-like"/>
    <property type="match status" value="1"/>
</dbReference>
<dbReference type="SUPFAM" id="SSF52440">
    <property type="entry name" value="PreATP-grasp domain"/>
    <property type="match status" value="1"/>
</dbReference>
<dbReference type="PROSITE" id="PS50975">
    <property type="entry name" value="ATP_GRASP"/>
    <property type="match status" value="1"/>
</dbReference>
<dbReference type="PROSITE" id="PS00843">
    <property type="entry name" value="DALA_DALA_LIGASE_1"/>
    <property type="match status" value="1"/>
</dbReference>
<keyword id="KW-0067">ATP-binding</keyword>
<keyword id="KW-0133">Cell shape</keyword>
<keyword id="KW-0961">Cell wall biogenesis/degradation</keyword>
<keyword id="KW-0963">Cytoplasm</keyword>
<keyword id="KW-0436">Ligase</keyword>
<keyword id="KW-0460">Magnesium</keyword>
<keyword id="KW-0464">Manganese</keyword>
<keyword id="KW-0479">Metal-binding</keyword>
<keyword id="KW-0547">Nucleotide-binding</keyword>
<keyword id="KW-0573">Peptidoglycan synthesis</keyword>
<sequence length="362" mass="40079">MTKKTQVGLIFGGNSSEYEVSITSAGNIYKAIDKDKFDVHPIWITNSGYVASEADSYKVLEEPGYMVEKNDKTANLSNLIELASRPELDVLFPIVHGNLGEDGVLQGLFRLIDKPFVGVDVLAAAVTMDKEFTKILAQRAGVPVAKWVSIKRYEYEDAKNQKLSYDWVSGQLGTSNLFVKPSNQGSSVGITHVTDDSNYAEALAEAFKYDDKVLVEEGIVGTEVETAVLGNDHPVVSGVGQIINADNTWYSYENKYSTESTTTLQIPAQIPAETAEKVQENALKIYQITECSGMARVDSMLRESDGEVIFNELNALPGFTNISMYPKLFEEAGISYPDLITRLIRLAEERYAHKKTILHKHD</sequence>
<name>DDL_LACDB</name>
<comment type="function">
    <text evidence="2">Cell wall formation.</text>
</comment>
<comment type="catalytic activity">
    <reaction evidence="2">
        <text>2 D-alanine + ATP = D-alanyl-D-alanine + ADP + phosphate + H(+)</text>
        <dbReference type="Rhea" id="RHEA:11224"/>
        <dbReference type="ChEBI" id="CHEBI:15378"/>
        <dbReference type="ChEBI" id="CHEBI:30616"/>
        <dbReference type="ChEBI" id="CHEBI:43474"/>
        <dbReference type="ChEBI" id="CHEBI:57416"/>
        <dbReference type="ChEBI" id="CHEBI:57822"/>
        <dbReference type="ChEBI" id="CHEBI:456216"/>
        <dbReference type="EC" id="6.3.2.4"/>
    </reaction>
</comment>
<comment type="cofactor">
    <cofactor evidence="1">
        <name>Mg(2+)</name>
        <dbReference type="ChEBI" id="CHEBI:18420"/>
    </cofactor>
    <cofactor evidence="1">
        <name>Mn(2+)</name>
        <dbReference type="ChEBI" id="CHEBI:29035"/>
    </cofactor>
    <text evidence="1">Binds 2 magnesium or manganese ions per subunit.</text>
</comment>
<comment type="pathway">
    <text evidence="2">Cell wall biogenesis; peptidoglycan biosynthesis.</text>
</comment>
<comment type="subcellular location">
    <subcellularLocation>
        <location evidence="2">Cytoplasm</location>
    </subcellularLocation>
</comment>
<comment type="similarity">
    <text evidence="2">Belongs to the D-alanine--D-alanine ligase family.</text>
</comment>
<evidence type="ECO:0000250" key="1"/>
<evidence type="ECO:0000255" key="2">
    <source>
        <dbReference type="HAMAP-Rule" id="MF_00047"/>
    </source>
</evidence>
<proteinExistence type="inferred from homology"/>
<protein>
    <recommendedName>
        <fullName evidence="2">D-alanine--D-alanine ligase</fullName>
        <ecNumber evidence="2">6.3.2.4</ecNumber>
    </recommendedName>
    <alternativeName>
        <fullName evidence="2">D-Ala-D-Ala ligase</fullName>
    </alternativeName>
    <alternativeName>
        <fullName evidence="2">D-alanylalanine synthetase</fullName>
    </alternativeName>
</protein>
<reference key="1">
    <citation type="journal article" date="2006" name="Proc. Natl. Acad. Sci. U.S.A.">
        <title>Comparative genomics of the lactic acid bacteria.</title>
        <authorList>
            <person name="Makarova K.S."/>
            <person name="Slesarev A."/>
            <person name="Wolf Y.I."/>
            <person name="Sorokin A."/>
            <person name="Mirkin B."/>
            <person name="Koonin E.V."/>
            <person name="Pavlov A."/>
            <person name="Pavlova N."/>
            <person name="Karamychev V."/>
            <person name="Polouchine N."/>
            <person name="Shakhova V."/>
            <person name="Grigoriev I."/>
            <person name="Lou Y."/>
            <person name="Rohksar D."/>
            <person name="Lucas S."/>
            <person name="Huang K."/>
            <person name="Goodstein D.M."/>
            <person name="Hawkins T."/>
            <person name="Plengvidhya V."/>
            <person name="Welker D."/>
            <person name="Hughes J."/>
            <person name="Goh Y."/>
            <person name="Benson A."/>
            <person name="Baldwin K."/>
            <person name="Lee J.-H."/>
            <person name="Diaz-Muniz I."/>
            <person name="Dosti B."/>
            <person name="Smeianov V."/>
            <person name="Wechter W."/>
            <person name="Barabote R."/>
            <person name="Lorca G."/>
            <person name="Altermann E."/>
            <person name="Barrangou R."/>
            <person name="Ganesan B."/>
            <person name="Xie Y."/>
            <person name="Rawsthorne H."/>
            <person name="Tamir D."/>
            <person name="Parker C."/>
            <person name="Breidt F."/>
            <person name="Broadbent J.R."/>
            <person name="Hutkins R."/>
            <person name="O'Sullivan D."/>
            <person name="Steele J."/>
            <person name="Unlu G."/>
            <person name="Saier M.H. Jr."/>
            <person name="Klaenhammer T."/>
            <person name="Richardson P."/>
            <person name="Kozyavkin S."/>
            <person name="Weimer B.C."/>
            <person name="Mills D.A."/>
        </authorList>
    </citation>
    <scope>NUCLEOTIDE SEQUENCE [LARGE SCALE GENOMIC DNA]</scope>
    <source>
        <strain>ATCC BAA-365 / Lb-18</strain>
    </source>
</reference>
<accession>Q04CI2</accession>
<gene>
    <name evidence="2" type="primary">ddl</name>
    <name type="ordered locus">LBUL_0161</name>
</gene>
<feature type="chain" id="PRO_0000341118" description="D-alanine--D-alanine ligase">
    <location>
        <begin position="1"/>
        <end position="362"/>
    </location>
</feature>
<feature type="domain" description="ATP-grasp" evidence="2">
    <location>
        <begin position="134"/>
        <end position="345"/>
    </location>
</feature>
<feature type="binding site" evidence="2">
    <location>
        <begin position="170"/>
        <end position="225"/>
    </location>
    <ligand>
        <name>ATP</name>
        <dbReference type="ChEBI" id="CHEBI:30616"/>
    </ligand>
</feature>
<feature type="binding site" evidence="2">
    <location>
        <position position="298"/>
    </location>
    <ligand>
        <name>Mg(2+)</name>
        <dbReference type="ChEBI" id="CHEBI:18420"/>
        <label>1</label>
    </ligand>
</feature>
<feature type="binding site" evidence="2">
    <location>
        <position position="312"/>
    </location>
    <ligand>
        <name>Mg(2+)</name>
        <dbReference type="ChEBI" id="CHEBI:18420"/>
        <label>1</label>
    </ligand>
</feature>
<feature type="binding site" evidence="2">
    <location>
        <position position="312"/>
    </location>
    <ligand>
        <name>Mg(2+)</name>
        <dbReference type="ChEBI" id="CHEBI:18420"/>
        <label>2</label>
    </ligand>
</feature>
<feature type="binding site" evidence="2">
    <location>
        <position position="314"/>
    </location>
    <ligand>
        <name>Mg(2+)</name>
        <dbReference type="ChEBI" id="CHEBI:18420"/>
        <label>2</label>
    </ligand>
</feature>
<organism>
    <name type="scientific">Lactobacillus delbrueckii subsp. bulgaricus (strain ATCC BAA-365 / Lb-18)</name>
    <dbReference type="NCBI Taxonomy" id="321956"/>
    <lineage>
        <taxon>Bacteria</taxon>
        <taxon>Bacillati</taxon>
        <taxon>Bacillota</taxon>
        <taxon>Bacilli</taxon>
        <taxon>Lactobacillales</taxon>
        <taxon>Lactobacillaceae</taxon>
        <taxon>Lactobacillus</taxon>
    </lineage>
</organism>